<dbReference type="EMBL" id="DQ465558">
    <property type="protein sequence ID" value="ABE76335.1"/>
    <property type="molecule type" value="Genomic_DNA"/>
</dbReference>
<dbReference type="SMR" id="Q1KN21"/>
<dbReference type="GlyCosmos" id="Q1KN21">
    <property type="glycosylation" value="1 site, No reported glycans"/>
</dbReference>
<dbReference type="GO" id="GO:0030424">
    <property type="term" value="C:axon"/>
    <property type="evidence" value="ECO:0007669"/>
    <property type="project" value="TreeGrafter"/>
</dbReference>
<dbReference type="GO" id="GO:0030425">
    <property type="term" value="C:dendrite"/>
    <property type="evidence" value="ECO:0007669"/>
    <property type="project" value="TreeGrafter"/>
</dbReference>
<dbReference type="GO" id="GO:0005615">
    <property type="term" value="C:extracellular space"/>
    <property type="evidence" value="ECO:0007669"/>
    <property type="project" value="TreeGrafter"/>
</dbReference>
<dbReference type="GO" id="GO:0008021">
    <property type="term" value="C:synaptic vesicle"/>
    <property type="evidence" value="ECO:0007669"/>
    <property type="project" value="TreeGrafter"/>
</dbReference>
<dbReference type="GO" id="GO:0008083">
    <property type="term" value="F:growth factor activity"/>
    <property type="evidence" value="ECO:0007669"/>
    <property type="project" value="UniProtKB-KW"/>
</dbReference>
<dbReference type="GO" id="GO:0005163">
    <property type="term" value="F:nerve growth factor receptor binding"/>
    <property type="evidence" value="ECO:0007669"/>
    <property type="project" value="TreeGrafter"/>
</dbReference>
<dbReference type="GO" id="GO:0007169">
    <property type="term" value="P:cell surface receptor protein tyrosine kinase signaling pathway"/>
    <property type="evidence" value="ECO:0007669"/>
    <property type="project" value="TreeGrafter"/>
</dbReference>
<dbReference type="GO" id="GO:0050804">
    <property type="term" value="P:modulation of chemical synaptic transmission"/>
    <property type="evidence" value="ECO:0007669"/>
    <property type="project" value="TreeGrafter"/>
</dbReference>
<dbReference type="GO" id="GO:0043524">
    <property type="term" value="P:negative regulation of neuron apoptotic process"/>
    <property type="evidence" value="ECO:0007669"/>
    <property type="project" value="TreeGrafter"/>
</dbReference>
<dbReference type="GO" id="GO:0021675">
    <property type="term" value="P:nerve development"/>
    <property type="evidence" value="ECO:0007669"/>
    <property type="project" value="TreeGrafter"/>
</dbReference>
<dbReference type="GO" id="GO:0038180">
    <property type="term" value="P:nerve growth factor signaling pathway"/>
    <property type="evidence" value="ECO:0007669"/>
    <property type="project" value="TreeGrafter"/>
</dbReference>
<dbReference type="GO" id="GO:0048812">
    <property type="term" value="P:neuron projection morphogenesis"/>
    <property type="evidence" value="ECO:0007669"/>
    <property type="project" value="TreeGrafter"/>
</dbReference>
<dbReference type="Gene3D" id="2.10.90.10">
    <property type="entry name" value="Cystine-knot cytokines"/>
    <property type="match status" value="1"/>
</dbReference>
<dbReference type="InterPro" id="IPR029034">
    <property type="entry name" value="Cystine-knot_cytokine"/>
</dbReference>
<dbReference type="InterPro" id="IPR020408">
    <property type="entry name" value="Nerve_growth_factor-like"/>
</dbReference>
<dbReference type="InterPro" id="IPR002072">
    <property type="entry name" value="Nerve_growth_factor-rel"/>
</dbReference>
<dbReference type="InterPro" id="IPR045815">
    <property type="entry name" value="NTF3_N"/>
</dbReference>
<dbReference type="PANTHER" id="PTHR11589">
    <property type="entry name" value="NERVE GROWTH FACTOR NGF -RELATED"/>
    <property type="match status" value="1"/>
</dbReference>
<dbReference type="PANTHER" id="PTHR11589:SF4">
    <property type="entry name" value="NEUROTROPHIN-3"/>
    <property type="match status" value="1"/>
</dbReference>
<dbReference type="Pfam" id="PF00243">
    <property type="entry name" value="NGF"/>
    <property type="match status" value="1"/>
</dbReference>
<dbReference type="Pfam" id="PF19338">
    <property type="entry name" value="NTF3_N"/>
    <property type="match status" value="1"/>
</dbReference>
<dbReference type="PIRSF" id="PIRSF001789">
    <property type="entry name" value="NGF"/>
    <property type="match status" value="1"/>
</dbReference>
<dbReference type="SMART" id="SM00140">
    <property type="entry name" value="NGF"/>
    <property type="match status" value="1"/>
</dbReference>
<dbReference type="SUPFAM" id="SSF57501">
    <property type="entry name" value="Cystine-knot cytokines"/>
    <property type="match status" value="1"/>
</dbReference>
<dbReference type="PROSITE" id="PS50270">
    <property type="entry name" value="NGF_2"/>
    <property type="match status" value="1"/>
</dbReference>
<proteinExistence type="inferred from homology"/>
<reference key="1">
    <citation type="journal article" date="2006" name="Mol. Phylogenet. Evol.">
        <title>Dispersal and vicariance: the complex evolutionary history of boid snakes.</title>
        <authorList>
            <person name="Noonan B.P."/>
            <person name="Chippindale P.T."/>
        </authorList>
    </citation>
    <scope>NUCLEOTIDE SEQUENCE [GENOMIC DNA]</scope>
</reference>
<keyword id="KW-0165">Cleavage on pair of basic residues</keyword>
<keyword id="KW-0325">Glycoprotein</keyword>
<keyword id="KW-0339">Growth factor</keyword>
<keyword id="KW-0964">Secreted</keyword>
<keyword id="KW-0732">Signal</keyword>
<evidence type="ECO:0000250" key="1"/>
<evidence type="ECO:0000255" key="2"/>
<evidence type="ECO:0000305" key="3"/>
<gene>
    <name type="primary">NTF3</name>
</gene>
<name>NTF3_ASPME</name>
<organism>
    <name type="scientific">Aspidites melanocephalus</name>
    <name type="common">Black-headed python</name>
    <dbReference type="NCBI Taxonomy" id="51883"/>
    <lineage>
        <taxon>Eukaryota</taxon>
        <taxon>Metazoa</taxon>
        <taxon>Chordata</taxon>
        <taxon>Craniata</taxon>
        <taxon>Vertebrata</taxon>
        <taxon>Euteleostomi</taxon>
        <taxon>Lepidosauria</taxon>
        <taxon>Squamata</taxon>
        <taxon>Bifurcata</taxon>
        <taxon>Unidentata</taxon>
        <taxon>Episquamata</taxon>
        <taxon>Toxicofera</taxon>
        <taxon>Serpentes</taxon>
        <taxon>Henophidia</taxon>
        <taxon>Pythonidae</taxon>
        <taxon>Aspidites</taxon>
    </lineage>
</organism>
<comment type="function">
    <text evidence="1">Seems to promote the survival of visceral and proprioceptive sensory neurons.</text>
</comment>
<comment type="subcellular location">
    <subcellularLocation>
        <location evidence="1">Secreted</location>
    </subcellularLocation>
</comment>
<comment type="similarity">
    <text evidence="3">Belongs to the NGF-beta family.</text>
</comment>
<accession>Q1KN21</accession>
<protein>
    <recommendedName>
        <fullName>Neurotrophin-3</fullName>
        <shortName>NT-3</shortName>
    </recommendedName>
</protein>
<feature type="signal peptide" evidence="2">
    <location>
        <begin position="1" status="less than"/>
        <end position="3"/>
    </location>
</feature>
<feature type="propeptide" id="PRO_0000346709" evidence="1">
    <location>
        <begin position="4"/>
        <end position="119"/>
    </location>
</feature>
<feature type="chain" id="PRO_0000346710" description="Neurotrophin-3">
    <location>
        <begin position="120"/>
        <end position="165" status="greater than"/>
    </location>
</feature>
<feature type="glycosylation site" description="N-linked (GlcNAc...) asparagine" evidence="2">
    <location>
        <position position="112"/>
    </location>
</feature>
<feature type="non-terminal residue">
    <location>
        <position position="1"/>
    </location>
</feature>
<feature type="non-terminal residue">
    <location>
        <position position="165"/>
    </location>
</feature>
<sequence length="165" mass="18316">IQSTSMDQGSLSEDSMNSFIRTLIQAGIWKNKVPKQAARTKDGMQTTVKEAEAEPGAVANRGVRLGSQPVVSVDTELLRQQRRFSSPRVLLSENAPLEPPPLYLMEEPMVLNQTSRRKRFAEGKSHRGEYSVCDSESRWVTDKSSAVDIRGHQVTVLGEIRMGSS</sequence>